<sequence length="630" mass="72065">MASPEGTDGEGMGCCGWFQVEAIVERKTGDTISDDESEEENETDTDVDGFIDNTLINNTQEDRETAQQLLQVQTAHADAQTLQKLKRKYIGSPLSDISNQQTVYREEVKRRLILSEDSGYGNTLETLETSQQVEYEKGNGCGSSQNGGSQNSNCSEHSVSNMDIDTNMETPTHQLQELFKSSNVQGRLHFKFKEVYGVPYTELVRTFKSDSTCCNDWICAIFGVNETLAEALKTILKPQCVYYHMQCLTCSWGVIVMMLIRYICGKNRKTITKSLSSILNVPQEQMLIQPPKLRSPAVALYFYKTAMSNISEVYGETPEWIQRQTQLQHSLQDNQFELSKMVQWAFDNEVTDDSQIAFLYAQLADIDSNAQAFLKSNMQAKYVKDCGIMCRHYKRAQQQQMNMCQWIKHICSKVDEGGDWKPIVQFLRYQGVDFISFLSYFKLFLQGTPKHNCLVLCGPPNTGKSCFAMSLINFFQGSVISFVNSQSHFWLQPLDNAKLGLLDDATDTCWRYIDDYLRNLLDGNPISLDRKHKQLVQIKCPPVIITTNVNPMQDAKLRYLHSRISVFKFENPFPLDNNGNPVYELSNVNWKCFFERTWSRLNLDNDEDKENNGDSIPTFRCVPEQNTRLL</sequence>
<organismHost>
    <name type="scientific">Homo sapiens</name>
    <name type="common">Human</name>
    <dbReference type="NCBI Taxonomy" id="9606"/>
</organismHost>
<protein>
    <recommendedName>
        <fullName evidence="1">Replication protein E1</fullName>
        <ecNumber evidence="1">5.6.2.4</ecNumber>
    </recommendedName>
    <alternativeName>
        <fullName evidence="1">ATP-dependent helicase E1</fullName>
    </alternativeName>
    <alternativeName>
        <fullName evidence="1">DNA 3'-5' helicase E1</fullName>
    </alternativeName>
</protein>
<comment type="function">
    <text evidence="1">ATP-dependent DNA 3'-5' helicase required for initiation of viral DNA replication. It forms a complex with the viral E2 protein. The E1-E2 complex binds to the replication origin which contains binding sites for both proteins. During the initial step, a dimer of E1 interacts with a dimer of protein E2 leading to a complex that binds the viral origin of replication with high specificity. Then, a second dimer of E1 displaces the E2 dimer in an ATP-dependent manner to form the E1 tetramer. Following this, two E1 monomers are added to each half of the site, which results in the formation of two E1 trimers on the viral ori. Subsequently, two hexamers will be created. The double hexamer acts as a bi-directional helicase machinery and unwinds the viral DNA and then recruits the host DNA polymerase to start replication.</text>
</comment>
<comment type="catalytic activity">
    <reaction evidence="1">
        <text>Couples ATP hydrolysis with the unwinding of duplex DNA by translocating in the 3'-5' direction.</text>
        <dbReference type="EC" id="5.6.2.4"/>
    </reaction>
</comment>
<comment type="catalytic activity">
    <reaction evidence="1">
        <text>ATP + H2O = ADP + phosphate + H(+)</text>
        <dbReference type="Rhea" id="RHEA:13065"/>
        <dbReference type="ChEBI" id="CHEBI:15377"/>
        <dbReference type="ChEBI" id="CHEBI:15378"/>
        <dbReference type="ChEBI" id="CHEBI:30616"/>
        <dbReference type="ChEBI" id="CHEBI:43474"/>
        <dbReference type="ChEBI" id="CHEBI:456216"/>
        <dbReference type="EC" id="5.6.2.4"/>
    </reaction>
</comment>
<comment type="subunit">
    <text evidence="1">Can form hexamers. Interacts with E2 protein; this interaction increases E1 DNA binding specificity. Interacts with host DNA polymerase subunit POLA2. Interacts with host single stranded DNA-binding protein RPA1. Interacts with host TOP1; this interaction stimulates the enzymatic activity of TOP1.</text>
</comment>
<comment type="subcellular location">
    <subcellularLocation>
        <location evidence="1">Host nucleus</location>
    </subcellularLocation>
</comment>
<comment type="PTM">
    <text evidence="1">Phosphorylated.</text>
</comment>
<comment type="PTM">
    <text evidence="1">Sumoylated.</text>
</comment>
<comment type="similarity">
    <text evidence="1">Belongs to the papillomaviridae E1 protein family.</text>
</comment>
<evidence type="ECO:0000255" key="1">
    <source>
        <dbReference type="HAMAP-Rule" id="MF_04000"/>
    </source>
</evidence>
<evidence type="ECO:0000256" key="2">
    <source>
        <dbReference type="SAM" id="MobiDB-lite"/>
    </source>
</evidence>
<accession>Q80957</accession>
<gene>
    <name evidence="1" type="primary">E1</name>
</gene>
<organism>
    <name type="scientific">Human papillomavirus 66</name>
    <dbReference type="NCBI Taxonomy" id="37119"/>
    <lineage>
        <taxon>Viruses</taxon>
        <taxon>Monodnaviria</taxon>
        <taxon>Shotokuvirae</taxon>
        <taxon>Cossaviricota</taxon>
        <taxon>Papovaviricetes</taxon>
        <taxon>Zurhausenvirales</taxon>
        <taxon>Papillomaviridae</taxon>
        <taxon>Firstpapillomavirinae</taxon>
        <taxon>Alphapapillomavirus</taxon>
        <taxon>Alphapapillomavirus 6</taxon>
    </lineage>
</organism>
<reference key="1">
    <citation type="submission" date="1995-10" db="EMBL/GenBank/DDBJ databases">
        <authorList>
            <person name="Delius H."/>
        </authorList>
    </citation>
    <scope>NUCLEOTIDE SEQUENCE [GENOMIC DNA]</scope>
</reference>
<feature type="chain" id="PRO_0000133157" description="Replication protein E1">
    <location>
        <begin position="1"/>
        <end position="630"/>
    </location>
</feature>
<feature type="domain" description="SF3 helicase" evidence="1">
    <location>
        <begin position="432"/>
        <end position="582"/>
    </location>
</feature>
<feature type="region of interest" description="Disordered" evidence="2">
    <location>
        <begin position="26"/>
        <end position="46"/>
    </location>
</feature>
<feature type="region of interest" description="Disordered" evidence="2">
    <location>
        <begin position="136"/>
        <end position="166"/>
    </location>
</feature>
<feature type="region of interest" description="DNA-binding region" evidence="1">
    <location>
        <begin position="167"/>
        <end position="333"/>
    </location>
</feature>
<feature type="short sequence motif" description="Nuclear localization signal" evidence="1">
    <location>
        <begin position="86"/>
        <end position="88"/>
    </location>
</feature>
<feature type="compositionally biased region" description="Acidic residues" evidence="2">
    <location>
        <begin position="32"/>
        <end position="46"/>
    </location>
</feature>
<feature type="compositionally biased region" description="Low complexity" evidence="2">
    <location>
        <begin position="142"/>
        <end position="155"/>
    </location>
</feature>
<feature type="compositionally biased region" description="Polar residues" evidence="2">
    <location>
        <begin position="156"/>
        <end position="166"/>
    </location>
</feature>
<feature type="binding site" evidence="1">
    <location>
        <begin position="458"/>
        <end position="465"/>
    </location>
    <ligand>
        <name>ATP</name>
        <dbReference type="ChEBI" id="CHEBI:30616"/>
    </ligand>
</feature>
<feature type="modified residue" description="Phosphoserine; by host" evidence="1">
    <location>
        <position position="92"/>
    </location>
</feature>
<feature type="cross-link" description="Glycyl lysine isopeptide (Lys-Gly) (interchain with G-Cter in SUMO)" evidence="1">
    <location>
        <position position="539"/>
    </location>
</feature>
<proteinExistence type="inferred from homology"/>
<dbReference type="EC" id="5.6.2.4" evidence="1"/>
<dbReference type="EMBL" id="U31794">
    <property type="protein sequence ID" value="AAA79501.1"/>
    <property type="molecule type" value="Genomic_DNA"/>
</dbReference>
<dbReference type="SMR" id="Q80957"/>
<dbReference type="Proteomes" id="UP000007673">
    <property type="component" value="Genome"/>
</dbReference>
<dbReference type="GO" id="GO:0042025">
    <property type="term" value="C:host cell nucleus"/>
    <property type="evidence" value="ECO:0007669"/>
    <property type="project" value="UniProtKB-SubCell"/>
</dbReference>
<dbReference type="GO" id="GO:0005524">
    <property type="term" value="F:ATP binding"/>
    <property type="evidence" value="ECO:0007669"/>
    <property type="project" value="UniProtKB-UniRule"/>
</dbReference>
<dbReference type="GO" id="GO:0016887">
    <property type="term" value="F:ATP hydrolysis activity"/>
    <property type="evidence" value="ECO:0007669"/>
    <property type="project" value="RHEA"/>
</dbReference>
<dbReference type="GO" id="GO:0003677">
    <property type="term" value="F:DNA binding"/>
    <property type="evidence" value="ECO:0007669"/>
    <property type="project" value="UniProtKB-UniRule"/>
</dbReference>
<dbReference type="GO" id="GO:0003678">
    <property type="term" value="F:DNA helicase activity"/>
    <property type="evidence" value="ECO:0007669"/>
    <property type="project" value="UniProtKB-UniRule"/>
</dbReference>
<dbReference type="GO" id="GO:0006260">
    <property type="term" value="P:DNA replication"/>
    <property type="evidence" value="ECO:0007669"/>
    <property type="project" value="UniProtKB-UniRule"/>
</dbReference>
<dbReference type="Gene3D" id="3.40.1310.10">
    <property type="match status" value="1"/>
</dbReference>
<dbReference type="Gene3D" id="3.40.50.300">
    <property type="entry name" value="P-loop containing nucleotide triphosphate hydrolases"/>
    <property type="match status" value="1"/>
</dbReference>
<dbReference type="Gene3D" id="1.10.10.510">
    <property type="entry name" value="Zinc finger, large T-antigen D1 domain"/>
    <property type="match status" value="1"/>
</dbReference>
<dbReference type="HAMAP" id="MF_04000">
    <property type="entry name" value="PPV_E1"/>
    <property type="match status" value="1"/>
</dbReference>
<dbReference type="InterPro" id="IPR014015">
    <property type="entry name" value="Helicase_SF3_DNA-vir"/>
</dbReference>
<dbReference type="InterPro" id="IPR027417">
    <property type="entry name" value="P-loop_NTPase"/>
</dbReference>
<dbReference type="InterPro" id="IPR001177">
    <property type="entry name" value="PPV_DNA_helicase_E1_C"/>
</dbReference>
<dbReference type="InterPro" id="IPR014000">
    <property type="entry name" value="PPV_DNA_helicase_E1_N"/>
</dbReference>
<dbReference type="InterPro" id="IPR046832">
    <property type="entry name" value="PPV_E1_DBD"/>
</dbReference>
<dbReference type="InterPro" id="IPR046935">
    <property type="entry name" value="PPV_E1_DBD_sf"/>
</dbReference>
<dbReference type="InterPro" id="IPR016393">
    <property type="entry name" value="Rep_E1_papillomaV"/>
</dbReference>
<dbReference type="InterPro" id="IPR037102">
    <property type="entry name" value="Znf_lg_T-Ag_D1_dom_sf"/>
</dbReference>
<dbReference type="Pfam" id="PF00519">
    <property type="entry name" value="PPV_E1_C"/>
    <property type="match status" value="1"/>
</dbReference>
<dbReference type="Pfam" id="PF20450">
    <property type="entry name" value="PPV_E1_DBD"/>
    <property type="match status" value="1"/>
</dbReference>
<dbReference type="Pfam" id="PF00524">
    <property type="entry name" value="PPV_E1_N"/>
    <property type="match status" value="1"/>
</dbReference>
<dbReference type="PIRSF" id="PIRSF003383">
    <property type="entry name" value="Rep_E1_papillomaV"/>
    <property type="match status" value="1"/>
</dbReference>
<dbReference type="SUPFAM" id="SSF55464">
    <property type="entry name" value="Origin of replication-binding domain, RBD-like"/>
    <property type="match status" value="1"/>
</dbReference>
<dbReference type="SUPFAM" id="SSF52540">
    <property type="entry name" value="P-loop containing nucleoside triphosphate hydrolases"/>
    <property type="match status" value="1"/>
</dbReference>
<dbReference type="PROSITE" id="PS51206">
    <property type="entry name" value="SF3_HELICASE_1"/>
    <property type="match status" value="1"/>
</dbReference>
<name>VE1_HPV66</name>
<keyword id="KW-0067">ATP-binding</keyword>
<keyword id="KW-0235">DNA replication</keyword>
<keyword id="KW-0238">DNA-binding</keyword>
<keyword id="KW-0244">Early protein</keyword>
<keyword id="KW-0347">Helicase</keyword>
<keyword id="KW-1048">Host nucleus</keyword>
<keyword id="KW-0378">Hydrolase</keyword>
<keyword id="KW-0413">Isomerase</keyword>
<keyword id="KW-1017">Isopeptide bond</keyword>
<keyword id="KW-0547">Nucleotide-binding</keyword>
<keyword id="KW-0597">Phosphoprotein</keyword>
<keyword id="KW-0832">Ubl conjugation</keyword>